<name>MNMG_NOSS1</name>
<evidence type="ECO:0000255" key="1">
    <source>
        <dbReference type="HAMAP-Rule" id="MF_00129"/>
    </source>
</evidence>
<keyword id="KW-0963">Cytoplasm</keyword>
<keyword id="KW-0274">FAD</keyword>
<keyword id="KW-0285">Flavoprotein</keyword>
<keyword id="KW-0520">NAD</keyword>
<keyword id="KW-1185">Reference proteome</keyword>
<keyword id="KW-0819">tRNA processing</keyword>
<accession>Q8YR87</accession>
<gene>
    <name evidence="1" type="primary">mnmG</name>
    <name evidence="1" type="synonym">gidA</name>
    <name type="ordered locus">alr3561</name>
</gene>
<organism>
    <name type="scientific">Nostoc sp. (strain PCC 7120 / SAG 25.82 / UTEX 2576)</name>
    <dbReference type="NCBI Taxonomy" id="103690"/>
    <lineage>
        <taxon>Bacteria</taxon>
        <taxon>Bacillati</taxon>
        <taxon>Cyanobacteriota</taxon>
        <taxon>Cyanophyceae</taxon>
        <taxon>Nostocales</taxon>
        <taxon>Nostocaceae</taxon>
        <taxon>Nostoc</taxon>
    </lineage>
</organism>
<feature type="chain" id="PRO_0000117044" description="tRNA uridine 5-carboxymethylaminomethyl modification enzyme MnmG">
    <location>
        <begin position="1"/>
        <end position="640"/>
    </location>
</feature>
<feature type="binding site" evidence="1">
    <location>
        <begin position="19"/>
        <end position="24"/>
    </location>
    <ligand>
        <name>FAD</name>
        <dbReference type="ChEBI" id="CHEBI:57692"/>
    </ligand>
</feature>
<feature type="binding site" evidence="1">
    <location>
        <begin position="280"/>
        <end position="294"/>
    </location>
    <ligand>
        <name>NAD(+)</name>
        <dbReference type="ChEBI" id="CHEBI:57540"/>
    </ligand>
</feature>
<protein>
    <recommendedName>
        <fullName evidence="1">tRNA uridine 5-carboxymethylaminomethyl modification enzyme MnmG</fullName>
    </recommendedName>
    <alternativeName>
        <fullName evidence="1">Glucose-inhibited division protein A</fullName>
    </alternativeName>
</protein>
<dbReference type="EMBL" id="BA000019">
    <property type="protein sequence ID" value="BAB75260.1"/>
    <property type="molecule type" value="Genomic_DNA"/>
</dbReference>
<dbReference type="PIR" id="AB2251">
    <property type="entry name" value="AB2251"/>
</dbReference>
<dbReference type="RefSeq" id="WP_010997711.1">
    <property type="nucleotide sequence ID" value="NZ_RSCN01000034.1"/>
</dbReference>
<dbReference type="SMR" id="Q8YR87"/>
<dbReference type="STRING" id="103690.gene:10495602"/>
<dbReference type="KEGG" id="ana:alr3561"/>
<dbReference type="eggNOG" id="COG0445">
    <property type="taxonomic scope" value="Bacteria"/>
</dbReference>
<dbReference type="OrthoDB" id="9815560at2"/>
<dbReference type="Proteomes" id="UP000002483">
    <property type="component" value="Chromosome"/>
</dbReference>
<dbReference type="GO" id="GO:0005737">
    <property type="term" value="C:cytoplasm"/>
    <property type="evidence" value="ECO:0007669"/>
    <property type="project" value="UniProtKB-SubCell"/>
</dbReference>
<dbReference type="GO" id="GO:0050660">
    <property type="term" value="F:flavin adenine dinucleotide binding"/>
    <property type="evidence" value="ECO:0007669"/>
    <property type="project" value="UniProtKB-UniRule"/>
</dbReference>
<dbReference type="GO" id="GO:0030488">
    <property type="term" value="P:tRNA methylation"/>
    <property type="evidence" value="ECO:0007669"/>
    <property type="project" value="TreeGrafter"/>
</dbReference>
<dbReference type="GO" id="GO:0002098">
    <property type="term" value="P:tRNA wobble uridine modification"/>
    <property type="evidence" value="ECO:0007669"/>
    <property type="project" value="InterPro"/>
</dbReference>
<dbReference type="FunFam" id="1.10.10.1800:FF:000001">
    <property type="entry name" value="tRNA uridine 5-carboxymethylaminomethyl modification enzyme MnmG"/>
    <property type="match status" value="1"/>
</dbReference>
<dbReference type="FunFam" id="1.10.150.570:FF:000001">
    <property type="entry name" value="tRNA uridine 5-carboxymethylaminomethyl modification enzyme MnmG"/>
    <property type="match status" value="1"/>
</dbReference>
<dbReference type="FunFam" id="3.50.50.60:FF:000094">
    <property type="entry name" value="tRNA uridine 5-carboxymethylaminomethyl modification enzyme MnmG"/>
    <property type="match status" value="1"/>
</dbReference>
<dbReference type="FunFam" id="3.50.50.60:FF:000119">
    <property type="entry name" value="tRNA uridine 5-carboxymethylaminomethyl modification enzyme MnmG"/>
    <property type="match status" value="1"/>
</dbReference>
<dbReference type="Gene3D" id="3.50.50.60">
    <property type="entry name" value="FAD/NAD(P)-binding domain"/>
    <property type="match status" value="2"/>
</dbReference>
<dbReference type="Gene3D" id="1.10.150.570">
    <property type="entry name" value="GidA associated domain, C-terminal subdomain"/>
    <property type="match status" value="1"/>
</dbReference>
<dbReference type="Gene3D" id="1.10.10.1800">
    <property type="entry name" value="tRNA uridine 5-carboxymethylaminomethyl modification enzyme MnmG/GidA"/>
    <property type="match status" value="1"/>
</dbReference>
<dbReference type="HAMAP" id="MF_00129">
    <property type="entry name" value="MnmG_GidA"/>
    <property type="match status" value="1"/>
</dbReference>
<dbReference type="InterPro" id="IPR036188">
    <property type="entry name" value="FAD/NAD-bd_sf"/>
</dbReference>
<dbReference type="InterPro" id="IPR049312">
    <property type="entry name" value="GIDA_C_N"/>
</dbReference>
<dbReference type="InterPro" id="IPR004416">
    <property type="entry name" value="MnmG"/>
</dbReference>
<dbReference type="InterPro" id="IPR002218">
    <property type="entry name" value="MnmG-rel"/>
</dbReference>
<dbReference type="InterPro" id="IPR020595">
    <property type="entry name" value="MnmG-rel_CS"/>
</dbReference>
<dbReference type="InterPro" id="IPR026904">
    <property type="entry name" value="MnmG_C"/>
</dbReference>
<dbReference type="InterPro" id="IPR047001">
    <property type="entry name" value="MnmG_C_subdom"/>
</dbReference>
<dbReference type="InterPro" id="IPR044920">
    <property type="entry name" value="MnmG_C_subdom_sf"/>
</dbReference>
<dbReference type="InterPro" id="IPR040131">
    <property type="entry name" value="MnmG_N"/>
</dbReference>
<dbReference type="NCBIfam" id="TIGR00136">
    <property type="entry name" value="mnmG_gidA"/>
    <property type="match status" value="1"/>
</dbReference>
<dbReference type="PANTHER" id="PTHR11806">
    <property type="entry name" value="GLUCOSE INHIBITED DIVISION PROTEIN A"/>
    <property type="match status" value="1"/>
</dbReference>
<dbReference type="PANTHER" id="PTHR11806:SF0">
    <property type="entry name" value="PROTEIN MTO1 HOMOLOG, MITOCHONDRIAL"/>
    <property type="match status" value="1"/>
</dbReference>
<dbReference type="Pfam" id="PF01134">
    <property type="entry name" value="GIDA"/>
    <property type="match status" value="1"/>
</dbReference>
<dbReference type="Pfam" id="PF21680">
    <property type="entry name" value="GIDA_C_1st"/>
    <property type="match status" value="1"/>
</dbReference>
<dbReference type="Pfam" id="PF13932">
    <property type="entry name" value="SAM_GIDA_C"/>
    <property type="match status" value="1"/>
</dbReference>
<dbReference type="SMART" id="SM01228">
    <property type="entry name" value="GIDA_assoc_3"/>
    <property type="match status" value="1"/>
</dbReference>
<dbReference type="SUPFAM" id="SSF51905">
    <property type="entry name" value="FAD/NAD(P)-binding domain"/>
    <property type="match status" value="1"/>
</dbReference>
<dbReference type="PROSITE" id="PS01280">
    <property type="entry name" value="GIDA_1"/>
    <property type="match status" value="1"/>
</dbReference>
<dbReference type="PROSITE" id="PS01281">
    <property type="entry name" value="GIDA_2"/>
    <property type="match status" value="1"/>
</dbReference>
<comment type="function">
    <text evidence="1">NAD-binding protein involved in the addition of a carboxymethylaminomethyl (cmnm) group at the wobble position (U34) of certain tRNAs, forming tRNA-cmnm(5)s(2)U34.</text>
</comment>
<comment type="cofactor">
    <cofactor evidence="1">
        <name>FAD</name>
        <dbReference type="ChEBI" id="CHEBI:57692"/>
    </cofactor>
</comment>
<comment type="subunit">
    <text evidence="1">Homodimer. Heterotetramer of two MnmE and two MnmG subunits.</text>
</comment>
<comment type="subcellular location">
    <subcellularLocation>
        <location evidence="1">Cytoplasm</location>
    </subcellularLocation>
</comment>
<comment type="similarity">
    <text evidence="1">Belongs to the MnmG family.</text>
</comment>
<reference key="1">
    <citation type="journal article" date="2001" name="DNA Res.">
        <title>Complete genomic sequence of the filamentous nitrogen-fixing cyanobacterium Anabaena sp. strain PCC 7120.</title>
        <authorList>
            <person name="Kaneko T."/>
            <person name="Nakamura Y."/>
            <person name="Wolk C.P."/>
            <person name="Kuritz T."/>
            <person name="Sasamoto S."/>
            <person name="Watanabe A."/>
            <person name="Iriguchi M."/>
            <person name="Ishikawa A."/>
            <person name="Kawashima K."/>
            <person name="Kimura T."/>
            <person name="Kishida Y."/>
            <person name="Kohara M."/>
            <person name="Matsumoto M."/>
            <person name="Matsuno A."/>
            <person name="Muraki A."/>
            <person name="Nakazaki N."/>
            <person name="Shimpo S."/>
            <person name="Sugimoto M."/>
            <person name="Takazawa M."/>
            <person name="Yamada M."/>
            <person name="Yasuda M."/>
            <person name="Tabata S."/>
        </authorList>
    </citation>
    <scope>NUCLEOTIDE SEQUENCE [LARGE SCALE GENOMIC DNA]</scope>
    <source>
        <strain>PCC 7120 / SAG 25.82 / UTEX 2576</strain>
    </source>
</reference>
<proteinExistence type="inferred from homology"/>
<sequence>MTMHNSVEFQDAFDVIVVGAGHSGCEAALATARLGCRTLLLTLNLDKIAWQPCNPAVGGPAKSQLTHEVDALGGEIGKMADRTYLQKRILNSSRGPAVWALRAQTDKREYAAIMKNIVENQENLSIRESMVTDLVLGANDEVIGVETYFGVAFQCKAVILTTGTFLGGKIWVGNKSMPAGRAGEFAAEGLTETLNRLGFETGRLKTGTPARVDKRSVDYSKMQLQPGDAEVRWFSFDPDVWVEREQLPCHMTRTTPETHRLIRENLHLSPVYGGWVEAKGPRYCPSIEDKIVRFVDKESHQIFIEPEGRDIPELYIQGFSTGLPENLQLQMLRSLPGLENCVMLRPAYAVEYDYLPATQCYPTLMTKKIAGLFCAGQVNGTTGYEEAAAQGIVAGINAARFVRDEEMIVFPREHSYLGTLVDDLCTKDLREPYRMLTSRSEYRLLLRSDNADQRLTPLGREIGLIDDRRWQMFTRKQEQITGEKERLYATRVKENDDVGKAIASNTQQAIKGSITLADLLRRPGFHYVDLDRYGLGNPELTPAEKEGAEIDIKYSGYLARQQSQIEQIARQAQRQLPGDLDYTTVDTLSKEAREKLNKVKPLTIGQAARIGGVNPADINALLIYLELRQSKHQKGLAVLP</sequence>